<gene>
    <name type="primary">MNN26</name>
    <name type="synonym">MNN7</name>
    <name type="ordered locus">CAALFM_C703600WA</name>
    <name type="ORF">CaO19.13984</name>
    <name type="ORF">CaO19.6692</name>
</gene>
<accession>Q59R28</accession>
<accession>A0A1D8PRD2</accession>
<accession>Q3MNZ7</accession>
<organism>
    <name type="scientific">Candida albicans (strain SC5314 / ATCC MYA-2876)</name>
    <name type="common">Yeast</name>
    <dbReference type="NCBI Taxonomy" id="237561"/>
    <lineage>
        <taxon>Eukaryota</taxon>
        <taxon>Fungi</taxon>
        <taxon>Dikarya</taxon>
        <taxon>Ascomycota</taxon>
        <taxon>Saccharomycotina</taxon>
        <taxon>Pichiomycetes</taxon>
        <taxon>Debaryomycetaceae</taxon>
        <taxon>Candida/Lodderomyces clade</taxon>
        <taxon>Candida</taxon>
    </lineage>
</organism>
<evidence type="ECO:0000250" key="1"/>
<evidence type="ECO:0000255" key="2"/>
<evidence type="ECO:0000256" key="3">
    <source>
        <dbReference type="SAM" id="MobiDB-lite"/>
    </source>
</evidence>
<evidence type="ECO:0000269" key="4">
    <source>
    </source>
</evidence>
<evidence type="ECO:0000305" key="5"/>
<feature type="chain" id="PRO_0000428639" description="Alpha-1,2-mannosyltransferase MNN26">
    <location>
        <begin position="1"/>
        <end position="756"/>
    </location>
</feature>
<feature type="topological domain" description="Cytoplasmic" evidence="2">
    <location>
        <begin position="1"/>
        <end position="10"/>
    </location>
</feature>
<feature type="transmembrane region" description="Helical" evidence="2">
    <location>
        <begin position="11"/>
        <end position="31"/>
    </location>
</feature>
<feature type="topological domain" description="Extracellular" evidence="2">
    <location>
        <begin position="32"/>
        <end position="756"/>
    </location>
</feature>
<feature type="region of interest" description="Disordered" evidence="3">
    <location>
        <begin position="723"/>
        <end position="756"/>
    </location>
</feature>
<feature type="compositionally biased region" description="Polar residues" evidence="3">
    <location>
        <begin position="723"/>
        <end position="734"/>
    </location>
</feature>
<sequence length="756" mass="87222">MSLRRLSPSHLILGTLVLGVIIFNLYVLTSTHEDIKKVKGPTYHTSDNTKIQSHISNYDSEEYVDRLTAEIEDAKKEELISEIRKKLEIQEKPGVIQKLKTELRMKYIDDIKNHLKQEITEQYSNEIFKQYAFSFEIYSKKVDEYALQLENSLKPASCLAILQQAEKDTDSIPDLENYLTKANDKYFKRQEYWRYLLKDILLNNKPKCEPLTKEEKGEKLNPTYQWDARIISEQYLLGSKLTIPGEKFRALRSAHDQVVKQLKSLPDPPSQFISGHGIVVNGGGNMIGSALTAIANMRERGSQLPVELILDTKQEYDKQICEELLPKKLNGKCVIVEEQVGKEVFDIINEKFSRKIMGLLVSSFDHIIAMDADNLAIKNVDNLLFTEPYLSTKMILWPDLWVKLTSPLYYKIARIEPGEIVDRFGIPNDASFAEYITKDKQSEVHYHDLDNLPSTISVETGQMVFSKREHLKSLLLALYYNINGKDFYIDLLYQGAYGEGDRETIVPALHVMNERYSLTNHKVHILGYDAPNGKYSETTLGQTDPRDGFEFYQDWRKFLTSRKLDTRLNPFQSGGYTSDLMKQFHDYKRQIYQDKQYEDEAAVHRMITYKLPSILFLHCNHPKIDPLKNSKEADAEFGVYSRRNMGLPDKVEKLLEGKDWELRFHTISQWVACEAISKSSLYWEKIAGKSQQQVCESVGKYIEFLKKDTFDNEATKLTILNQLGEKSQPKQPEINNNNNNNNNDDDNGKNKQGAAS</sequence>
<comment type="function">
    <text evidence="4">Alpha-1,2-mannosyltransferase required for cell wall integrity. Responsible for addition of the first alpha-1,2-linked mannose to form the branches on the mannan backbone of oligosaccharides. Addition of alpha-1,2-mannose is required for stabilization of the alpha-1,6-mannose backbone and hence regulates mannan fibril length; and is important for both immune recognition and virulence.</text>
</comment>
<comment type="pathway">
    <text>Protein modification; protein glycosylation.</text>
</comment>
<comment type="subcellular location">
    <subcellularLocation>
        <location evidence="1">Golgi apparatus membrane</location>
        <topology evidence="1">Single-pass type II membrane protein</topology>
    </subcellularLocation>
</comment>
<comment type="disruption phenotype">
    <text evidence="4">Leads to sensitivity to calcofluor white and SDS, as well as to thermosensitivity.</text>
</comment>
<comment type="similarity">
    <text evidence="5">Belongs to the MNN1/MNT family.</text>
</comment>
<keyword id="KW-0333">Golgi apparatus</keyword>
<keyword id="KW-0472">Membrane</keyword>
<keyword id="KW-1185">Reference proteome</keyword>
<keyword id="KW-0735">Signal-anchor</keyword>
<keyword id="KW-0808">Transferase</keyword>
<keyword id="KW-0812">Transmembrane</keyword>
<keyword id="KW-1133">Transmembrane helix</keyword>
<proteinExistence type="inferred from homology"/>
<reference key="1">
    <citation type="journal article" date="2004" name="Proc. Natl. Acad. Sci. U.S.A.">
        <title>The diploid genome sequence of Candida albicans.</title>
        <authorList>
            <person name="Jones T."/>
            <person name="Federspiel N.A."/>
            <person name="Chibana H."/>
            <person name="Dungan J."/>
            <person name="Kalman S."/>
            <person name="Magee B.B."/>
            <person name="Newport G."/>
            <person name="Thorstenson Y.R."/>
            <person name="Agabian N."/>
            <person name="Magee P.T."/>
            <person name="Davis R.W."/>
            <person name="Scherer S."/>
        </authorList>
    </citation>
    <scope>NUCLEOTIDE SEQUENCE [LARGE SCALE GENOMIC DNA]</scope>
    <source>
        <strain>SC5314 / ATCC MYA-2876</strain>
    </source>
</reference>
<reference key="2">
    <citation type="journal article" date="2007" name="Genome Biol.">
        <title>Assembly of the Candida albicans genome into sixteen supercontigs aligned on the eight chromosomes.</title>
        <authorList>
            <person name="van het Hoog M."/>
            <person name="Rast T.J."/>
            <person name="Martchenko M."/>
            <person name="Grindle S."/>
            <person name="Dignard D."/>
            <person name="Hogues H."/>
            <person name="Cuomo C."/>
            <person name="Berriman M."/>
            <person name="Scherer S."/>
            <person name="Magee B.B."/>
            <person name="Whiteway M."/>
            <person name="Chibana H."/>
            <person name="Nantel A."/>
            <person name="Magee P.T."/>
        </authorList>
    </citation>
    <scope>GENOME REANNOTATION</scope>
    <source>
        <strain>SC5314 / ATCC MYA-2876</strain>
    </source>
</reference>
<reference key="3">
    <citation type="journal article" date="2013" name="Genome Biol.">
        <title>Assembly of a phased diploid Candida albicans genome facilitates allele-specific measurements and provides a simple model for repeat and indel structure.</title>
        <authorList>
            <person name="Muzzey D."/>
            <person name="Schwartz K."/>
            <person name="Weissman J.S."/>
            <person name="Sherlock G."/>
        </authorList>
    </citation>
    <scope>NUCLEOTIDE SEQUENCE [LARGE SCALE GENOMIC DNA]</scope>
    <scope>GENOME REANNOTATION</scope>
    <source>
        <strain>SC5314 / ATCC MYA-2876</strain>
    </source>
</reference>
<reference key="4">
    <citation type="journal article" date="2013" name="PLoS Pathog.">
        <title>The Mnn2 mannosyltransferase family modulates mannoprotein fibril length, immune recognition and virulence of Candida albicans.</title>
        <authorList>
            <person name="Hall R.A."/>
            <person name="Bates S."/>
            <person name="Lenardon M.D."/>
            <person name="Maccallum D.M."/>
            <person name="Wagener J."/>
            <person name="Lowman D.W."/>
            <person name="Kruppa M.D."/>
            <person name="Williams D.L."/>
            <person name="Odds F.C."/>
            <person name="Brown A.J."/>
            <person name="Gow N.A."/>
        </authorList>
    </citation>
    <scope>FUNCTION</scope>
    <scope>DISRUPTION PHENOTYPE</scope>
</reference>
<name>MNN26_CANAL</name>
<protein>
    <recommendedName>
        <fullName>Alpha-1,2-mannosyltransferase MNN26</fullName>
        <ecNumber>2.4.1.-</ecNumber>
    </recommendedName>
</protein>
<dbReference type="EC" id="2.4.1.-"/>
<dbReference type="EMBL" id="CP017629">
    <property type="protein sequence ID" value="AOW30702.1"/>
    <property type="molecule type" value="Genomic_DNA"/>
</dbReference>
<dbReference type="RefSeq" id="XP_712145.1">
    <property type="nucleotide sequence ID" value="XM_707052.1"/>
</dbReference>
<dbReference type="SMR" id="Q59R28"/>
<dbReference type="STRING" id="237561.Q59R28"/>
<dbReference type="CAZy" id="GT71">
    <property type="family name" value="Glycosyltransferase Family 71"/>
</dbReference>
<dbReference type="EnsemblFungi" id="C7_03600W_A-T">
    <property type="protein sequence ID" value="C7_03600W_A-T-p1"/>
    <property type="gene ID" value="C7_03600W_A"/>
</dbReference>
<dbReference type="GeneID" id="3646240"/>
<dbReference type="KEGG" id="cal:CAALFM_C703600WA"/>
<dbReference type="CGD" id="CAL0000182010">
    <property type="gene designation" value="MNN26"/>
</dbReference>
<dbReference type="VEuPathDB" id="FungiDB:C7_03600W_A"/>
<dbReference type="eggNOG" id="ENOG502QVWG">
    <property type="taxonomic scope" value="Eukaryota"/>
</dbReference>
<dbReference type="HOGENOM" id="CLU_013298_1_0_1"/>
<dbReference type="InParanoid" id="Q59R28"/>
<dbReference type="OMA" id="HVMNERY"/>
<dbReference type="OrthoDB" id="4484309at2759"/>
<dbReference type="UniPathway" id="UPA00378"/>
<dbReference type="PHI-base" id="PHI:2888"/>
<dbReference type="Proteomes" id="UP000000559">
    <property type="component" value="Chromosome 7"/>
</dbReference>
<dbReference type="GO" id="GO:0005794">
    <property type="term" value="C:Golgi apparatus"/>
    <property type="evidence" value="ECO:0000318"/>
    <property type="project" value="GO_Central"/>
</dbReference>
<dbReference type="GO" id="GO:0000139">
    <property type="term" value="C:Golgi membrane"/>
    <property type="evidence" value="ECO:0007669"/>
    <property type="project" value="UniProtKB-SubCell"/>
</dbReference>
<dbReference type="GO" id="GO:0016020">
    <property type="term" value="C:membrane"/>
    <property type="evidence" value="ECO:0000314"/>
    <property type="project" value="CGD"/>
</dbReference>
<dbReference type="GO" id="GO:0000026">
    <property type="term" value="F:alpha-1,2-mannosyltransferase activity"/>
    <property type="evidence" value="ECO:0000318"/>
    <property type="project" value="GO_Central"/>
</dbReference>
<dbReference type="GO" id="GO:0046354">
    <property type="term" value="P:mannan biosynthetic process"/>
    <property type="evidence" value="ECO:0000315"/>
    <property type="project" value="CGD"/>
</dbReference>
<dbReference type="GO" id="GO:0035268">
    <property type="term" value="P:protein mannosylation"/>
    <property type="evidence" value="ECO:0000315"/>
    <property type="project" value="CGD"/>
</dbReference>
<dbReference type="InterPro" id="IPR022751">
    <property type="entry name" value="Alpha_mannosyltransferase"/>
</dbReference>
<dbReference type="InterPro" id="IPR029044">
    <property type="entry name" value="Nucleotide-diphossugar_trans"/>
</dbReference>
<dbReference type="PANTHER" id="PTHR31646">
    <property type="entry name" value="ALPHA-1,2-MANNOSYLTRANSFERASE MNN2"/>
    <property type="match status" value="1"/>
</dbReference>
<dbReference type="PANTHER" id="PTHR31646:SF1">
    <property type="entry name" value="ALPHA-1,2-MANNOSYLTRANSFERASE MNN2"/>
    <property type="match status" value="1"/>
</dbReference>
<dbReference type="Pfam" id="PF11051">
    <property type="entry name" value="Mannosyl_trans3"/>
    <property type="match status" value="1"/>
</dbReference>
<dbReference type="SUPFAM" id="SSF53448">
    <property type="entry name" value="Nucleotide-diphospho-sugar transferases"/>
    <property type="match status" value="1"/>
</dbReference>